<evidence type="ECO:0000250" key="1"/>
<evidence type="ECO:0000250" key="2">
    <source>
        <dbReference type="UniProtKB" id="Q68SA9"/>
    </source>
</evidence>
<evidence type="ECO:0000250" key="3">
    <source>
        <dbReference type="UniProtKB" id="Q76LX8"/>
    </source>
</evidence>
<evidence type="ECO:0000250" key="4">
    <source>
        <dbReference type="UniProtKB" id="Q9UKP4"/>
    </source>
</evidence>
<evidence type="ECO:0000255" key="5"/>
<evidence type="ECO:0000255" key="6">
    <source>
        <dbReference type="PROSITE-ProRule" id="PRU00210"/>
    </source>
</evidence>
<evidence type="ECO:0000255" key="7">
    <source>
        <dbReference type="PROSITE-ProRule" id="PRU00233"/>
    </source>
</evidence>
<evidence type="ECO:0000255" key="8">
    <source>
        <dbReference type="PROSITE-ProRule" id="PRU00276"/>
    </source>
</evidence>
<evidence type="ECO:0000255" key="9">
    <source>
        <dbReference type="PROSITE-ProRule" id="PRU10095"/>
    </source>
</evidence>
<evidence type="ECO:0000256" key="10">
    <source>
        <dbReference type="SAM" id="MobiDB-lite"/>
    </source>
</evidence>
<evidence type="ECO:0000269" key="11">
    <source>
    </source>
</evidence>
<evidence type="ECO:0000303" key="12">
    <source>
    </source>
</evidence>
<comment type="function">
    <text evidence="4">Metalloprotease. Was previously shown to degrade COMP. However, a later study found no activity against COMP.</text>
</comment>
<comment type="cofactor">
    <cofactor evidence="1">
        <name>Zn(2+)</name>
        <dbReference type="ChEBI" id="CHEBI:29105"/>
    </cofactor>
    <text evidence="1">Binds 1 zinc ion per subunit.</text>
</comment>
<comment type="subunit">
    <text evidence="11">Interacts with COMP.</text>
</comment>
<comment type="subcellular location">
    <subcellularLocation>
        <location evidence="2">Secreted</location>
        <location evidence="2">Extracellular space</location>
        <location evidence="2">Extracellular matrix</location>
    </subcellularLocation>
    <text evidence="2">Also found associated with the external cell surface.</text>
</comment>
<comment type="alternative products">
    <event type="alternative splicing"/>
    <isoform>
        <id>Q1EHB3-1</id>
        <name>1</name>
        <sequence type="displayed"/>
    </isoform>
    <isoform>
        <id>Q1EHB3-2</id>
        <name>2</name>
        <name>ADAMTS7B</name>
        <sequence type="described" ref="VSP_035114"/>
    </isoform>
</comment>
<comment type="tissue specificity">
    <text evidence="11">Detected in liver, ovary, kidney, testicle, lung and embryo.</text>
</comment>
<comment type="domain">
    <text evidence="1">The spacer domain and the TSP type-1 domains are important for a tight interaction with the extracellular matrix.</text>
</comment>
<comment type="domain">
    <text evidence="1">The conserved cysteine present in the cysteine-switch motif binds the catalytic zinc ion, thus inhibiting the enzyme. The dissociation of the cysteine from the zinc ion upon the activation-peptide release activates the enzyme (By similarity).</text>
</comment>
<comment type="PTM">
    <text evidence="3">Glycosylated (By similarity). Can be O-fucosylated by POFUT2 on a serine or a threonine residue found within the consensus sequence C1-X(2)-(S/T)-C2-G of the TSP type-1 repeat domains where C1 and C2 are the first and second cysteine residue of the repeat, respectively. Fucosylated repeats can then be further glycosylated by the addition of a beta-1,3-glucose residue by the glucosyltransferase, B3GALTL. Fucosylation mediates the efficient secretion of ADAMTS family members. Can also be C-glycosylated with one or two mannose molecules on tryptophan residues within the consensus sequence W-X-X-W of the TPRs. N- and C-glycosylations can also facilitate secretion.</text>
</comment>
<comment type="PTM">
    <text evidence="4">O-glycosylated proteoglycan; contains chondroitin sulfate.</text>
</comment>
<comment type="PTM">
    <text evidence="2 4">May be cleaved by a furin endopeptidase. The precursor is sequentially processed.</text>
</comment>
<name>ATS7_RAT</name>
<accession>Q1EHB3</accession>
<accession>Q1XD63</accession>
<feature type="signal peptide" evidence="5">
    <location>
        <begin position="1"/>
        <end position="20"/>
    </location>
</feature>
<feature type="propeptide" id="PRO_0000348236" evidence="1">
    <location>
        <begin position="21"/>
        <end position="217"/>
    </location>
</feature>
<feature type="chain" id="PRO_0000348237" description="A disintegrin and metalloproteinase with thrombospondin motifs 7">
    <location>
        <begin position="218"/>
        <end position="1595"/>
    </location>
</feature>
<feature type="domain" description="Peptidase M12B" evidence="8">
    <location>
        <begin position="223"/>
        <end position="434"/>
    </location>
</feature>
<feature type="domain" description="Disintegrin">
    <location>
        <begin position="444"/>
        <end position="519"/>
    </location>
</feature>
<feature type="domain" description="TSP type-1 1" evidence="6">
    <location>
        <begin position="520"/>
        <end position="575"/>
    </location>
</feature>
<feature type="domain" description="TSP type-1 2" evidence="6">
    <location>
        <begin position="801"/>
        <end position="860"/>
    </location>
</feature>
<feature type="domain" description="TSP type-1 3" evidence="6">
    <location>
        <begin position="861"/>
        <end position="917"/>
    </location>
</feature>
<feature type="domain" description="TSP type-1 4" evidence="6">
    <location>
        <begin position="922"/>
        <end position="975"/>
    </location>
</feature>
<feature type="domain" description="TSP type-1 5" evidence="6">
    <location>
        <begin position="1320"/>
        <end position="1368"/>
    </location>
</feature>
<feature type="domain" description="TSP type-1 6" evidence="6">
    <location>
        <begin position="1371"/>
        <end position="1431"/>
    </location>
</feature>
<feature type="domain" description="TSP type-1 7" evidence="6">
    <location>
        <begin position="1433"/>
        <end position="1476"/>
    </location>
</feature>
<feature type="domain" description="TSP type-1 8" evidence="6">
    <location>
        <begin position="1478"/>
        <end position="1538"/>
    </location>
</feature>
<feature type="domain" description="PLAC" evidence="7">
    <location>
        <begin position="1541"/>
        <end position="1581"/>
    </location>
</feature>
<feature type="region of interest" description="Disordered" evidence="10">
    <location>
        <begin position="165"/>
        <end position="218"/>
    </location>
</feature>
<feature type="region of interest" description="Spacer">
    <location>
        <begin position="680"/>
        <end position="791"/>
    </location>
</feature>
<feature type="region of interest" description="Disordered" evidence="10">
    <location>
        <begin position="989"/>
        <end position="1035"/>
    </location>
</feature>
<feature type="region of interest" description="Disordered" evidence="10">
    <location>
        <begin position="1077"/>
        <end position="1121"/>
    </location>
</feature>
<feature type="region of interest" description="Disordered" evidence="10">
    <location>
        <begin position="1179"/>
        <end position="1234"/>
    </location>
</feature>
<feature type="region of interest" description="Disordered" evidence="10">
    <location>
        <begin position="1255"/>
        <end position="1315"/>
    </location>
</feature>
<feature type="short sequence motif" description="Cysteine switch" evidence="1">
    <location>
        <begin position="189"/>
        <end position="196"/>
    </location>
</feature>
<feature type="compositionally biased region" description="Basic and acidic residues" evidence="10">
    <location>
        <begin position="198"/>
        <end position="210"/>
    </location>
</feature>
<feature type="compositionally biased region" description="Pro residues" evidence="10">
    <location>
        <begin position="1005"/>
        <end position="1015"/>
    </location>
</feature>
<feature type="compositionally biased region" description="Pro residues" evidence="10">
    <location>
        <begin position="1079"/>
        <end position="1089"/>
    </location>
</feature>
<feature type="compositionally biased region" description="Low complexity" evidence="10">
    <location>
        <begin position="1220"/>
        <end position="1232"/>
    </location>
</feature>
<feature type="compositionally biased region" description="Polar residues" evidence="10">
    <location>
        <begin position="1268"/>
        <end position="1280"/>
    </location>
</feature>
<feature type="active site" evidence="8 9">
    <location>
        <position position="370"/>
    </location>
</feature>
<feature type="binding site" description="in inhibited form" evidence="1">
    <location>
        <position position="191"/>
    </location>
    <ligand>
        <name>Zn(2+)</name>
        <dbReference type="ChEBI" id="CHEBI:29105"/>
        <note>catalytic</note>
    </ligand>
</feature>
<feature type="binding site" evidence="1">
    <location>
        <position position="369"/>
    </location>
    <ligand>
        <name>Zn(2+)</name>
        <dbReference type="ChEBI" id="CHEBI:29105"/>
        <note>catalytic</note>
    </ligand>
</feature>
<feature type="binding site" evidence="1">
    <location>
        <position position="373"/>
    </location>
    <ligand>
        <name>Zn(2+)</name>
        <dbReference type="ChEBI" id="CHEBI:29105"/>
        <note>catalytic</note>
    </ligand>
</feature>
<feature type="binding site" evidence="1">
    <location>
        <position position="379"/>
    </location>
    <ligand>
        <name>Zn(2+)</name>
        <dbReference type="ChEBI" id="CHEBI:29105"/>
        <note>catalytic</note>
    </ligand>
</feature>
<feature type="glycosylation site" description="N-linked (GlcNAc...) asparagine" evidence="5">
    <location>
        <position position="84"/>
    </location>
</feature>
<feature type="glycosylation site" description="N-linked (GlcNAc...) asparagine" evidence="5">
    <location>
        <position position="105"/>
    </location>
</feature>
<feature type="glycosylation site" description="N-linked (GlcNAc...) asparagine" evidence="5">
    <location>
        <position position="619"/>
    </location>
</feature>
<feature type="disulfide bond" evidence="1">
    <location>
        <begin position="299"/>
        <end position="353"/>
    </location>
</feature>
<feature type="disulfide bond" evidence="1">
    <location>
        <begin position="328"/>
        <end position="335"/>
    </location>
</feature>
<feature type="disulfide bond" evidence="1">
    <location>
        <begin position="347"/>
        <end position="429"/>
    </location>
</feature>
<feature type="disulfide bond" evidence="1">
    <location>
        <begin position="386"/>
        <end position="413"/>
    </location>
</feature>
<feature type="disulfide bond" evidence="1">
    <location>
        <begin position="456"/>
        <end position="479"/>
    </location>
</feature>
<feature type="disulfide bond" evidence="1">
    <location>
        <begin position="467"/>
        <end position="485"/>
    </location>
</feature>
<feature type="disulfide bond" evidence="1">
    <location>
        <begin position="474"/>
        <end position="504"/>
    </location>
</feature>
<feature type="disulfide bond" evidence="1">
    <location>
        <begin position="498"/>
        <end position="509"/>
    </location>
</feature>
<feature type="disulfide bond" evidence="1">
    <location>
        <begin position="532"/>
        <end position="569"/>
    </location>
</feature>
<feature type="disulfide bond" evidence="1">
    <location>
        <begin position="536"/>
        <end position="574"/>
    </location>
</feature>
<feature type="disulfide bond" evidence="1">
    <location>
        <begin position="547"/>
        <end position="559"/>
    </location>
</feature>
<feature type="splice variant" id="VSP_035114" description="In isoform 2." evidence="12">
    <original>MHRGLNLLLILCALAPHVLGPASG</original>
    <variation>MAEEDIGTESFGEEGERGPQSPDEIIFQQCKMFALHIQRKRKQLGASFWHLCTGRCSGRWGSLSCSCHCQRCQRWREREDGTRRSQGQREKKDDKGLEKPKRKVQKGKQMQKASGDKESENSISRKKPLPSLEGPRPLSWVDFGHKSRSPPRRSCLLSVPSRSLAGFQVSFSEGQAFFAWDPETSETQIGDKKLQNSRSFGGTSEGTDGLGLLHRQGTSVALQAVQSLSCRVGTVLR</variation>
    <location>
        <begin position="1"/>
        <end position="24"/>
    </location>
</feature>
<proteinExistence type="evidence at protein level"/>
<organism>
    <name type="scientific">Rattus norvegicus</name>
    <name type="common">Rat</name>
    <dbReference type="NCBI Taxonomy" id="10116"/>
    <lineage>
        <taxon>Eukaryota</taxon>
        <taxon>Metazoa</taxon>
        <taxon>Chordata</taxon>
        <taxon>Craniata</taxon>
        <taxon>Vertebrata</taxon>
        <taxon>Euteleostomi</taxon>
        <taxon>Mammalia</taxon>
        <taxon>Eutheria</taxon>
        <taxon>Euarchontoglires</taxon>
        <taxon>Glires</taxon>
        <taxon>Rodentia</taxon>
        <taxon>Myomorpha</taxon>
        <taxon>Muroidea</taxon>
        <taxon>Muridae</taxon>
        <taxon>Murinae</taxon>
        <taxon>Rattus</taxon>
    </lineage>
</organism>
<dbReference type="EC" id="3.4.24.-"/>
<dbReference type="EMBL" id="AY327121">
    <property type="protein sequence ID" value="AAQ94615.1"/>
    <property type="molecule type" value="mRNA"/>
</dbReference>
<dbReference type="EMBL" id="AY257482">
    <property type="protein sequence ID" value="AAP79641.1"/>
    <property type="molecule type" value="mRNA"/>
</dbReference>
<dbReference type="RefSeq" id="NP_001040566.1">
    <molecule id="Q1EHB3-2"/>
    <property type="nucleotide sequence ID" value="NM_001047101.2"/>
</dbReference>
<dbReference type="RefSeq" id="NP_001380769.1">
    <molecule id="Q1EHB3-1"/>
    <property type="nucleotide sequence ID" value="NM_001393840.1"/>
</dbReference>
<dbReference type="RefSeq" id="XP_006243587.1">
    <property type="nucleotide sequence ID" value="XM_006243525.1"/>
</dbReference>
<dbReference type="SMR" id="Q1EHB3"/>
<dbReference type="FunCoup" id="Q1EHB3">
    <property type="interactions" value="442"/>
</dbReference>
<dbReference type="STRING" id="10116.ENSRNOP00000060069"/>
<dbReference type="MEROPS" id="M12.231"/>
<dbReference type="GlyCosmos" id="Q1EHB3">
    <property type="glycosylation" value="3 sites, No reported glycans"/>
</dbReference>
<dbReference type="GlyGen" id="Q1EHB3">
    <property type="glycosylation" value="7 sites"/>
</dbReference>
<dbReference type="iPTMnet" id="Q1EHB3"/>
<dbReference type="PhosphoSitePlus" id="Q1EHB3"/>
<dbReference type="PaxDb" id="10116-ENSRNOP00000060069"/>
<dbReference type="Ensembl" id="ENSRNOT00000068394.4">
    <molecule id="Q1EHB3-2"/>
    <property type="protein sequence ID" value="ENSRNOP00000060069.1"/>
    <property type="gene ID" value="ENSRNOG00000028036.8"/>
</dbReference>
<dbReference type="GeneID" id="315879"/>
<dbReference type="KEGG" id="rno:315879"/>
<dbReference type="UCSC" id="RGD:1306713">
    <molecule id="Q1EHB3-1"/>
    <property type="organism name" value="rat"/>
</dbReference>
<dbReference type="AGR" id="RGD:1306713"/>
<dbReference type="CTD" id="11173"/>
<dbReference type="RGD" id="1306713">
    <property type="gene designation" value="Adamts7"/>
</dbReference>
<dbReference type="VEuPathDB" id="HostDB:ENSRNOG00000028036"/>
<dbReference type="eggNOG" id="KOG3538">
    <property type="taxonomic scope" value="Eukaryota"/>
</dbReference>
<dbReference type="GeneTree" id="ENSGT00940000159819"/>
<dbReference type="HOGENOM" id="CLU_000660_2_1_1"/>
<dbReference type="InParanoid" id="Q1EHB3"/>
<dbReference type="OMA" id="YCSERQA"/>
<dbReference type="OrthoDB" id="22636at9989"/>
<dbReference type="TreeFam" id="TF313537"/>
<dbReference type="Reactome" id="R-RNO-5173214">
    <property type="pathway name" value="O-glycosylation of TSR domain-containing proteins"/>
</dbReference>
<dbReference type="PRO" id="PR:Q1EHB3"/>
<dbReference type="Proteomes" id="UP000002494">
    <property type="component" value="Chromosome 8"/>
</dbReference>
<dbReference type="Bgee" id="ENSRNOG00000028036">
    <property type="expression patterns" value="Expressed in heart and 16 other cell types or tissues"/>
</dbReference>
<dbReference type="ExpressionAtlas" id="Q1EHB3">
    <property type="expression patterns" value="baseline and differential"/>
</dbReference>
<dbReference type="GO" id="GO:0009986">
    <property type="term" value="C:cell surface"/>
    <property type="evidence" value="ECO:0000266"/>
    <property type="project" value="RGD"/>
</dbReference>
<dbReference type="GO" id="GO:0031012">
    <property type="term" value="C:extracellular matrix"/>
    <property type="evidence" value="ECO:0000266"/>
    <property type="project" value="RGD"/>
</dbReference>
<dbReference type="GO" id="GO:0005576">
    <property type="term" value="C:extracellular region"/>
    <property type="evidence" value="ECO:0007669"/>
    <property type="project" value="UniProtKB-KW"/>
</dbReference>
<dbReference type="GO" id="GO:0046872">
    <property type="term" value="F:metal ion binding"/>
    <property type="evidence" value="ECO:0007669"/>
    <property type="project" value="UniProtKB-KW"/>
</dbReference>
<dbReference type="GO" id="GO:0004222">
    <property type="term" value="F:metalloendopeptidase activity"/>
    <property type="evidence" value="ECO:0000266"/>
    <property type="project" value="RGD"/>
</dbReference>
<dbReference type="GO" id="GO:0008237">
    <property type="term" value="F:metallopeptidase activity"/>
    <property type="evidence" value="ECO:0000266"/>
    <property type="project" value="RGD"/>
</dbReference>
<dbReference type="GO" id="GO:0071773">
    <property type="term" value="P:cellular response to BMP stimulus"/>
    <property type="evidence" value="ECO:0000266"/>
    <property type="project" value="RGD"/>
</dbReference>
<dbReference type="GO" id="GO:0071347">
    <property type="term" value="P:cellular response to interleukin-1"/>
    <property type="evidence" value="ECO:0000266"/>
    <property type="project" value="RGD"/>
</dbReference>
<dbReference type="GO" id="GO:0071356">
    <property type="term" value="P:cellular response to tumor necrosis factor"/>
    <property type="evidence" value="ECO:0000266"/>
    <property type="project" value="RGD"/>
</dbReference>
<dbReference type="GO" id="GO:0002062">
    <property type="term" value="P:chondrocyte differentiation"/>
    <property type="evidence" value="ECO:0000266"/>
    <property type="project" value="RGD"/>
</dbReference>
<dbReference type="GO" id="GO:0030199">
    <property type="term" value="P:collagen fibril organization"/>
    <property type="evidence" value="ECO:0000266"/>
    <property type="project" value="RGD"/>
</dbReference>
<dbReference type="GO" id="GO:0030198">
    <property type="term" value="P:extracellular matrix organization"/>
    <property type="evidence" value="ECO:0000318"/>
    <property type="project" value="GO_Central"/>
</dbReference>
<dbReference type="GO" id="GO:0032331">
    <property type="term" value="P:negative regulation of chondrocyte differentiation"/>
    <property type="evidence" value="ECO:0000266"/>
    <property type="project" value="RGD"/>
</dbReference>
<dbReference type="GO" id="GO:0001503">
    <property type="term" value="P:ossification"/>
    <property type="evidence" value="ECO:0000266"/>
    <property type="project" value="RGD"/>
</dbReference>
<dbReference type="GO" id="GO:0043931">
    <property type="term" value="P:ossification involved in bone maturation"/>
    <property type="evidence" value="ECO:0000266"/>
    <property type="project" value="RGD"/>
</dbReference>
<dbReference type="GO" id="GO:0006029">
    <property type="term" value="P:proteoglycan metabolic process"/>
    <property type="evidence" value="ECO:0000266"/>
    <property type="project" value="RGD"/>
</dbReference>
<dbReference type="GO" id="GO:0006508">
    <property type="term" value="P:proteolysis"/>
    <property type="evidence" value="ECO:0000266"/>
    <property type="project" value="RGD"/>
</dbReference>
<dbReference type="GO" id="GO:0051603">
    <property type="term" value="P:proteolysis involved in protein catabolic process"/>
    <property type="evidence" value="ECO:0000266"/>
    <property type="project" value="RGD"/>
</dbReference>
<dbReference type="CDD" id="cd04273">
    <property type="entry name" value="ZnMc_ADAMTS_like"/>
    <property type="match status" value="1"/>
</dbReference>
<dbReference type="FunFam" id="2.20.100.10:FF:000006">
    <property type="entry name" value="A disintegrin and metalloproteinase with thrombospondin motifs 1"/>
    <property type="match status" value="1"/>
</dbReference>
<dbReference type="FunFam" id="2.60.120.830:FF:000001">
    <property type="entry name" value="A disintegrin and metalloproteinase with thrombospondin motifs 1"/>
    <property type="match status" value="1"/>
</dbReference>
<dbReference type="FunFam" id="3.40.390.10:FF:000001">
    <property type="entry name" value="A disintegrin and metalloproteinase with thrombospondin motifs 1"/>
    <property type="match status" value="1"/>
</dbReference>
<dbReference type="FunFam" id="3.40.1620.60:FF:000004">
    <property type="entry name" value="A disintegrin and metalloproteinase with thrombospondin motifs 12"/>
    <property type="match status" value="1"/>
</dbReference>
<dbReference type="FunFam" id="2.20.100.10:FF:000098">
    <property type="entry name" value="A disintegrin and metalloproteinase with thrombospondin motifs 7"/>
    <property type="match status" value="1"/>
</dbReference>
<dbReference type="FunFam" id="2.20.100.10:FF:000005">
    <property type="entry name" value="ADAM metallopeptidase with thrombospondin type 1 motif 9"/>
    <property type="match status" value="3"/>
</dbReference>
<dbReference type="Gene3D" id="2.60.120.830">
    <property type="match status" value="1"/>
</dbReference>
<dbReference type="Gene3D" id="3.40.1620.60">
    <property type="match status" value="1"/>
</dbReference>
<dbReference type="Gene3D" id="3.40.390.10">
    <property type="entry name" value="Collagenase (Catalytic Domain)"/>
    <property type="match status" value="1"/>
</dbReference>
<dbReference type="Gene3D" id="2.20.100.10">
    <property type="entry name" value="Thrombospondin type-1 (TSP1) repeat"/>
    <property type="match status" value="7"/>
</dbReference>
<dbReference type="InterPro" id="IPR013273">
    <property type="entry name" value="ADAMTS/ADAMTS-like"/>
</dbReference>
<dbReference type="InterPro" id="IPR050439">
    <property type="entry name" value="ADAMTS_ADAMTS-like"/>
</dbReference>
<dbReference type="InterPro" id="IPR041645">
    <property type="entry name" value="ADAMTS_CR_2"/>
</dbReference>
<dbReference type="InterPro" id="IPR045371">
    <property type="entry name" value="ADAMTS_CR_3"/>
</dbReference>
<dbReference type="InterPro" id="IPR010294">
    <property type="entry name" value="ADAMTS_spacer1"/>
</dbReference>
<dbReference type="InterPro" id="IPR024079">
    <property type="entry name" value="MetalloPept_cat_dom_sf"/>
</dbReference>
<dbReference type="InterPro" id="IPR001590">
    <property type="entry name" value="Peptidase_M12B"/>
</dbReference>
<dbReference type="InterPro" id="IPR002870">
    <property type="entry name" value="Peptidase_M12B_N"/>
</dbReference>
<dbReference type="InterPro" id="IPR010909">
    <property type="entry name" value="PLAC"/>
</dbReference>
<dbReference type="InterPro" id="IPR000884">
    <property type="entry name" value="TSP1_rpt"/>
</dbReference>
<dbReference type="InterPro" id="IPR036383">
    <property type="entry name" value="TSP1_rpt_sf"/>
</dbReference>
<dbReference type="PANTHER" id="PTHR13723:SF142">
    <property type="entry name" value="A DISINTEGRIN AND METALLOPROTEINASE WITH THROMBOSPONDIN MOTIFS 7"/>
    <property type="match status" value="1"/>
</dbReference>
<dbReference type="PANTHER" id="PTHR13723">
    <property type="entry name" value="ADAMTS A DISINTEGRIN AND METALLOPROTEASE WITH THROMBOSPONDIN MOTIFS PROTEASE"/>
    <property type="match status" value="1"/>
</dbReference>
<dbReference type="Pfam" id="PF17771">
    <property type="entry name" value="ADAMTS_CR_2"/>
    <property type="match status" value="1"/>
</dbReference>
<dbReference type="Pfam" id="PF19236">
    <property type="entry name" value="ADAMTS_CR_3"/>
    <property type="match status" value="1"/>
</dbReference>
<dbReference type="Pfam" id="PF05986">
    <property type="entry name" value="ADAMTS_spacer1"/>
    <property type="match status" value="1"/>
</dbReference>
<dbReference type="Pfam" id="PF01562">
    <property type="entry name" value="Pep_M12B_propep"/>
    <property type="match status" value="1"/>
</dbReference>
<dbReference type="Pfam" id="PF01421">
    <property type="entry name" value="Reprolysin"/>
    <property type="match status" value="1"/>
</dbReference>
<dbReference type="Pfam" id="PF19030">
    <property type="entry name" value="TSP1_ADAMTS"/>
    <property type="match status" value="7"/>
</dbReference>
<dbReference type="Pfam" id="PF00090">
    <property type="entry name" value="TSP_1"/>
    <property type="match status" value="1"/>
</dbReference>
<dbReference type="PRINTS" id="PR01857">
    <property type="entry name" value="ADAMTSFAMILY"/>
</dbReference>
<dbReference type="SMART" id="SM00209">
    <property type="entry name" value="TSP1"/>
    <property type="match status" value="8"/>
</dbReference>
<dbReference type="SUPFAM" id="SSF55486">
    <property type="entry name" value="Metalloproteases ('zincins'), catalytic domain"/>
    <property type="match status" value="1"/>
</dbReference>
<dbReference type="SUPFAM" id="SSF82895">
    <property type="entry name" value="TSP-1 type 1 repeat"/>
    <property type="match status" value="8"/>
</dbReference>
<dbReference type="PROSITE" id="PS50215">
    <property type="entry name" value="ADAM_MEPRO"/>
    <property type="match status" value="1"/>
</dbReference>
<dbReference type="PROSITE" id="PS50900">
    <property type="entry name" value="PLAC"/>
    <property type="match status" value="1"/>
</dbReference>
<dbReference type="PROSITE" id="PS50092">
    <property type="entry name" value="TSP1"/>
    <property type="match status" value="7"/>
</dbReference>
<dbReference type="PROSITE" id="PS00142">
    <property type="entry name" value="ZINC_PROTEASE"/>
    <property type="match status" value="1"/>
</dbReference>
<gene>
    <name type="primary">Adamts7</name>
</gene>
<keyword id="KW-0025">Alternative splicing</keyword>
<keyword id="KW-0165">Cleavage on pair of basic residues</keyword>
<keyword id="KW-1015">Disulfide bond</keyword>
<keyword id="KW-0272">Extracellular matrix</keyword>
<keyword id="KW-0325">Glycoprotein</keyword>
<keyword id="KW-0378">Hydrolase</keyword>
<keyword id="KW-0479">Metal-binding</keyword>
<keyword id="KW-0482">Metalloprotease</keyword>
<keyword id="KW-0645">Protease</keyword>
<keyword id="KW-0654">Proteoglycan</keyword>
<keyword id="KW-1185">Reference proteome</keyword>
<keyword id="KW-0677">Repeat</keyword>
<keyword id="KW-0964">Secreted</keyword>
<keyword id="KW-0732">Signal</keyword>
<keyword id="KW-0862">Zinc</keyword>
<keyword id="KW-0865">Zymogen</keyword>
<sequence length="1595" mass="175814">MHRGLNLLLILCALAPHVLGPASGLPTEGRAGLDIVHPVRVDAGGSFLSYELWPRVLRKRDVSAAQASSAFYQLQYQGRELLFNLTTNPYLLAPGFVSEIRRRSNLSNVHIQTSVPTCHLLGDVQDPELEGGFAAISACDGLRGVFQLSNEDYFIEPLDEVPAQPGHAQPHMVYKHKRSGQQDDSRTSGTCGVQGSPELKHQREHWEQRQQKRRQQRSISKEKWVETLVVADSKMVEYHGQPQVESYVLTIMNMVAGLYHDPSIGNPIHITVVRLIILEDEEKDLKITHHADDTLKNFCRWQKNVNMKGDDHPQHHDTAILLTRKDLCATMNHPCETLGLSHVAGLCHPQLSCSVSEDTGLPLAFTVAHELGHSFGIQHDGTGNDCESIGKRPFIMSPQLLYDRGIPLTWSRCSREYITRFLDRGWGLCLDDRPSKGVINFPSVLPGVLYDVNHQCRLQYGPSSAYCEDVDNVCYTLWCSVGTTCHSKMDAAVDGTSCGKNKWCLNGECVPEGFQPETVDGGWSGWSAWSVCSRSCGVGVRSSERQCTQPVPKNKGKYCVGERKRYRLCNLQACPPDRPSFRHTQCSQFDSMLYKGKLHKWVPVLNDENPCELHCRPFNYSNREKLRDAVMDGTPCYQGRISRDICIDGICKKVGCDFELDSGAEEDRCGVCRGDGSTCHTVSRTFKEAEGMGYVDVGLIPAGAREILIEEVAEAANFLALRSEDPDKYFLNGGWTIQWNGDYQVAGTTFTYTRKGNWETLTSPGPTTEPVWIQLLFQERNPGVHYKYTIQRASHSEAQPPEFSWHYGPWSKCPVTCGTGVQRQSLYCMEKQAGIVDEGHCDHLSRPRDRKRKCNEEPCPARWWVGDWQPCSRSCGPGGFFRRAVFCTRSVGLDEQRALEPSACGHLPRPLAEIPCYHYVACPSSWGVGNWSQCSVTCGAGIRQRSVLCINNTGVPCDGAERPITETFCFLQPCQYSTYIVDTGASGSGSSSPELFNEVDFDPHQPVPRPSPASSPKPVSISNAIDEEDPELDPPGPVFVDDFYYDYNFINFHEDLSYGSFEESHSDLVDIGGQTVPPHIRPTEPPSDSPVPTAGAPGAEEEGIQGSWSPSPLLSEASHSPPVLLENTPVNPLANFLTEEESPIGAPELGLPSVSWPPASVDGMVTSVAPGNPDELLVREDTQSQPSTPWSDRNKLSKDGNPLGPTSPALPKSPFPTQPSSPSNSTTQASLSPDAVEVSTGWNVALDPVLEADLKPVHAPTDPGLLDQIQTPHTEGTQSPGLLPRPAQETQTNSSKDPAVQPLQPSLVEDGAPTDLLPAKNASWQVGNWSQCSTTCGLGAIWRLVRCSSGNDEDCTLSSRPQPARHCHLRPCAAWRAGNWSKCSRNCGGGSATRDVQCVDTRDLRPLRPFHCQPGPTKPPTRQLCGTQPCLPWYTSSWRECSEACGGGEQQRLVTCPEPGLCEESLRPNNTRPCNTHPCTQWVVGPWGQCSAPCGGGVQRRLVKCVNTQTGLAEEDSDLCSHEAWPESSRPCATEDCELVEPSRCERDRLPFNFCETLRLLGRCQLPTIRAQCCRSCPPLSRGVPSRGHQRVARR</sequence>
<protein>
    <recommendedName>
        <fullName>A disintegrin and metalloproteinase with thrombospondin motifs 7</fullName>
        <shortName>ADAM-TS 7</shortName>
        <shortName>ADAM-TS7</shortName>
        <shortName>ADAMTS-7</shortName>
        <ecNumber>3.4.24.-</ecNumber>
    </recommendedName>
</protein>
<reference key="1">
    <citation type="journal article" date="2006" name="FASEB J.">
        <title>ADAMTS-7: a metalloproteinase that directly binds to and degrades cartilage oligomeric matrix protein.</title>
        <authorList>
            <person name="Liu C.-J."/>
            <person name="Kong W."/>
            <person name="Ilalov K."/>
            <person name="Yu S."/>
            <person name="Xu K."/>
            <person name="Prazak L."/>
            <person name="Fajardo M."/>
            <person name="Sehgal B."/>
            <person name="Di Cesare P.E."/>
        </authorList>
    </citation>
    <scope>NUCLEOTIDE SEQUENCE [MRNA] (ISOFORMS 1 AND 2)</scope>
    <scope>INTERACTION WITH COMP</scope>
    <scope>TISSUE SPECIFICITY</scope>
    <source>
        <strain>Brown Norway</strain>
        <tissue>Brain</tissue>
    </source>
</reference>